<accession>P29771</accession>
<protein>
    <recommendedName>
        <fullName>Uncharacterized 22.8 kDa protein in nuc-osa intergenic region</fullName>
    </recommendedName>
</protein>
<geneLocation type="plasmid">
    <name>IncW pSa</name>
</geneLocation>
<organism>
    <name type="scientific">Shigella flexneri</name>
    <dbReference type="NCBI Taxonomy" id="623"/>
    <lineage>
        <taxon>Bacteria</taxon>
        <taxon>Pseudomonadati</taxon>
        <taxon>Pseudomonadota</taxon>
        <taxon>Gammaproteobacteria</taxon>
        <taxon>Enterobacterales</taxon>
        <taxon>Enterobacteriaceae</taxon>
        <taxon>Shigella</taxon>
    </lineage>
</organism>
<proteinExistence type="predicted"/>
<keyword id="KW-0614">Plasmid</keyword>
<feature type="chain" id="PRO_0000066347" description="Uncharacterized 22.8 kDa protein in nuc-osa intergenic region">
    <location>
        <begin position="1"/>
        <end position="200"/>
    </location>
</feature>
<feature type="region of interest" description="Disordered" evidence="1">
    <location>
        <begin position="1"/>
        <end position="27"/>
    </location>
</feature>
<feature type="region of interest" description="Disordered" evidence="1">
    <location>
        <begin position="42"/>
        <end position="79"/>
    </location>
</feature>
<feature type="region of interest" description="Disordered" evidence="1">
    <location>
        <begin position="169"/>
        <end position="200"/>
    </location>
</feature>
<feature type="compositionally biased region" description="Basic and acidic residues" evidence="1">
    <location>
        <begin position="187"/>
        <end position="200"/>
    </location>
</feature>
<name>YNU2_SHIFL</name>
<evidence type="ECO:0000256" key="1">
    <source>
        <dbReference type="SAM" id="MobiDB-lite"/>
    </source>
</evidence>
<dbReference type="EMBL" id="U30471">
    <property type="protein sequence ID" value="AAA75247.1"/>
    <property type="molecule type" value="Genomic_DNA"/>
</dbReference>
<dbReference type="PIR" id="S23148">
    <property type="entry name" value="S23148"/>
</dbReference>
<dbReference type="InterPro" id="IPR040782">
    <property type="entry name" value="KfrB"/>
</dbReference>
<dbReference type="Pfam" id="PF18790">
    <property type="entry name" value="KfrB"/>
    <property type="match status" value="1"/>
</dbReference>
<sequence>MTDTRREQEKDERRKLQEQSRQNEAETMRLLAFEAGRQLAEIPKEAKGNEPLLENYKSGLQETRKELETTPDATKSTNANRLERDVERAIIEAQQVREAVGREKARADEFHRHAEPGETYRGRVIGRTNSYVIQADDSRPGTIILHERAAVSGAEKVKMNDHAEISYPHGRAGIVRNPQAAQHQRQRQMEKTGAGREHGR</sequence>
<reference key="1">
    <citation type="journal article" date="1991" name="J. Bacteriol.">
        <title>The osa gene of pSa encodes a 21.1-kilodalton protein that suppresses Agrobacterium tumefaciens oncogenicity.</title>
        <authorList>
            <person name="Close S.M."/>
            <person name="Kado C.I."/>
        </authorList>
    </citation>
    <scope>NUCLEOTIDE SEQUENCE [GENOMIC DNA]</scope>
</reference>